<keyword id="KW-0165">Cleavage on pair of basic residues</keyword>
<keyword id="KW-1015">Disulfide bond</keyword>
<keyword id="KW-0325">Glycoprotein</keyword>
<keyword id="KW-0339">Growth factor</keyword>
<keyword id="KW-0964">Secreted</keyword>
<keyword id="KW-0732">Signal</keyword>
<sequence length="223" mass="25107">SCMKAAPMKEVSLRGQGNLAYPGLRTQANLENLGGPNDATRGLTSLADTFEQVIEELLDEQQAIQPSKENKDADLYSSRVMLSSQVPLEPPLLFLLEEYKNYLDAANMSMRVRRHSDPARRGELSVCESTSEWVTAAEKKTAVDMSGATVTVLEKVPVPKGQLKQYFYETKCSSKGYTKEGCRGIDKRYWNSQCRTTQSYVRALTMDNKKRVGWRFIRIDTSC</sequence>
<evidence type="ECO:0000250" key="1"/>
<evidence type="ECO:0000255" key="2"/>
<evidence type="ECO:0000305" key="3"/>
<dbReference type="EMBL" id="AY988043">
    <property type="protein sequence ID" value="AAY44250.1"/>
    <property type="molecule type" value="Genomic_DNA"/>
</dbReference>
<dbReference type="SMR" id="Q1X6Z5"/>
<dbReference type="GlyCosmos" id="Q1X6Z5">
    <property type="glycosylation" value="1 site, No reported glycans"/>
</dbReference>
<dbReference type="GO" id="GO:0030424">
    <property type="term" value="C:axon"/>
    <property type="evidence" value="ECO:0007669"/>
    <property type="project" value="TreeGrafter"/>
</dbReference>
<dbReference type="GO" id="GO:0030425">
    <property type="term" value="C:dendrite"/>
    <property type="evidence" value="ECO:0007669"/>
    <property type="project" value="TreeGrafter"/>
</dbReference>
<dbReference type="GO" id="GO:0005615">
    <property type="term" value="C:extracellular space"/>
    <property type="evidence" value="ECO:0007669"/>
    <property type="project" value="TreeGrafter"/>
</dbReference>
<dbReference type="GO" id="GO:0008021">
    <property type="term" value="C:synaptic vesicle"/>
    <property type="evidence" value="ECO:0007669"/>
    <property type="project" value="TreeGrafter"/>
</dbReference>
<dbReference type="GO" id="GO:0008083">
    <property type="term" value="F:growth factor activity"/>
    <property type="evidence" value="ECO:0007669"/>
    <property type="project" value="UniProtKB-KW"/>
</dbReference>
<dbReference type="GO" id="GO:0005163">
    <property type="term" value="F:nerve growth factor receptor binding"/>
    <property type="evidence" value="ECO:0007669"/>
    <property type="project" value="TreeGrafter"/>
</dbReference>
<dbReference type="GO" id="GO:0007169">
    <property type="term" value="P:cell surface receptor protein tyrosine kinase signaling pathway"/>
    <property type="evidence" value="ECO:0007669"/>
    <property type="project" value="TreeGrafter"/>
</dbReference>
<dbReference type="GO" id="GO:0050804">
    <property type="term" value="P:modulation of chemical synaptic transmission"/>
    <property type="evidence" value="ECO:0007669"/>
    <property type="project" value="TreeGrafter"/>
</dbReference>
<dbReference type="GO" id="GO:0043524">
    <property type="term" value="P:negative regulation of neuron apoptotic process"/>
    <property type="evidence" value="ECO:0007669"/>
    <property type="project" value="TreeGrafter"/>
</dbReference>
<dbReference type="GO" id="GO:0021675">
    <property type="term" value="P:nerve development"/>
    <property type="evidence" value="ECO:0007669"/>
    <property type="project" value="TreeGrafter"/>
</dbReference>
<dbReference type="GO" id="GO:0038180">
    <property type="term" value="P:nerve growth factor signaling pathway"/>
    <property type="evidence" value="ECO:0007669"/>
    <property type="project" value="TreeGrafter"/>
</dbReference>
<dbReference type="GO" id="GO:0048812">
    <property type="term" value="P:neuron projection morphogenesis"/>
    <property type="evidence" value="ECO:0007669"/>
    <property type="project" value="TreeGrafter"/>
</dbReference>
<dbReference type="FunFam" id="2.10.90.10:FF:000002">
    <property type="entry name" value="Brain-derived neurotrophic factor"/>
    <property type="match status" value="1"/>
</dbReference>
<dbReference type="Gene3D" id="2.10.90.10">
    <property type="entry name" value="Cystine-knot cytokines"/>
    <property type="match status" value="1"/>
</dbReference>
<dbReference type="InterPro" id="IPR020430">
    <property type="entry name" value="Brain-der_neurotrophic_factor"/>
</dbReference>
<dbReference type="InterPro" id="IPR029034">
    <property type="entry name" value="Cystine-knot_cytokine"/>
</dbReference>
<dbReference type="InterPro" id="IPR020408">
    <property type="entry name" value="Nerve_growth_factor-like"/>
</dbReference>
<dbReference type="InterPro" id="IPR002072">
    <property type="entry name" value="Nerve_growth_factor-rel"/>
</dbReference>
<dbReference type="InterPro" id="IPR019846">
    <property type="entry name" value="Nerve_growth_factor_CS"/>
</dbReference>
<dbReference type="PANTHER" id="PTHR11589:SF3">
    <property type="entry name" value="BRAIN-DERIVED NEUROTROPHIC FACTOR"/>
    <property type="match status" value="1"/>
</dbReference>
<dbReference type="PANTHER" id="PTHR11589">
    <property type="entry name" value="NERVE GROWTH FACTOR NGF -RELATED"/>
    <property type="match status" value="1"/>
</dbReference>
<dbReference type="Pfam" id="PF00243">
    <property type="entry name" value="NGF"/>
    <property type="match status" value="1"/>
</dbReference>
<dbReference type="PIRSF" id="PIRSF001789">
    <property type="entry name" value="NGF"/>
    <property type="match status" value="1"/>
</dbReference>
<dbReference type="PRINTS" id="PR01912">
    <property type="entry name" value="BDNFACTOR"/>
</dbReference>
<dbReference type="PRINTS" id="PR00268">
    <property type="entry name" value="NGF"/>
</dbReference>
<dbReference type="SMART" id="SM00140">
    <property type="entry name" value="NGF"/>
    <property type="match status" value="1"/>
</dbReference>
<dbReference type="SUPFAM" id="SSF57501">
    <property type="entry name" value="Cystine-knot cytokines"/>
    <property type="match status" value="1"/>
</dbReference>
<dbReference type="PROSITE" id="PS00248">
    <property type="entry name" value="NGF_1"/>
    <property type="match status" value="1"/>
</dbReference>
<dbReference type="PROSITE" id="PS50270">
    <property type="entry name" value="NGF_2"/>
    <property type="match status" value="1"/>
</dbReference>
<feature type="signal peptide" evidence="2">
    <location>
        <begin position="1" status="less than"/>
        <end position="5"/>
    </location>
</feature>
<feature type="propeptide" id="PRO_0000346695" evidence="1">
    <location>
        <begin position="6"/>
        <end position="114"/>
    </location>
</feature>
<feature type="chain" id="PRO_0000346696" description="Neurotrophic factor BDNF">
    <location>
        <begin position="115"/>
        <end position="223" status="greater than"/>
    </location>
</feature>
<feature type="glycosylation site" description="N-linked (GlcNAc...) asparagine" evidence="2">
    <location>
        <position position="107"/>
    </location>
</feature>
<feature type="disulfide bond" evidence="1">
    <location>
        <begin position="127"/>
        <end position="194"/>
    </location>
</feature>
<feature type="disulfide bond" evidence="1">
    <location>
        <begin position="172"/>
        <end position="223"/>
    </location>
</feature>
<feature type="non-terminal residue">
    <location>
        <position position="1"/>
    </location>
</feature>
<feature type="non-terminal residue">
    <location>
        <position position="223"/>
    </location>
</feature>
<organism>
    <name type="scientific">Ramphotyphlops sp. (strain YPM 13663)</name>
    <name type="common">Blind snake</name>
    <dbReference type="NCBI Taxonomy" id="380608"/>
    <lineage>
        <taxon>Eukaryota</taxon>
        <taxon>Metazoa</taxon>
        <taxon>Chordata</taxon>
        <taxon>Craniata</taxon>
        <taxon>Vertebrata</taxon>
        <taxon>Euteleostomi</taxon>
        <taxon>Lepidosauria</taxon>
        <taxon>Squamata</taxon>
        <taxon>Bifurcata</taxon>
        <taxon>Unidentata</taxon>
        <taxon>Episquamata</taxon>
        <taxon>Toxicofera</taxon>
        <taxon>Serpentes</taxon>
        <taxon>Typhlopoidea</taxon>
        <taxon>Typhlopidae</taxon>
        <taxon>Ramphotyphlops</taxon>
    </lineage>
</organism>
<proteinExistence type="inferred from homology"/>
<name>BDNF_RAMSP</name>
<accession>Q1X6Z5</accession>
<comment type="function">
    <text evidence="1">Promotes the survival of neuronal populations that are all located either in the central nervous system or directly connected to it.</text>
</comment>
<comment type="subcellular location">
    <subcellularLocation>
        <location evidence="1">Secreted</location>
    </subcellularLocation>
</comment>
<comment type="similarity">
    <text evidence="3">Belongs to the NGF-beta family.</text>
</comment>
<protein>
    <recommendedName>
        <fullName evidence="3">Neurotrophic factor BDNF precursor form</fullName>
        <shortName>proBDNF</shortName>
    </recommendedName>
    <alternativeName>
        <fullName>Brain-derived neurotrophic factor</fullName>
    </alternativeName>
    <component>
        <recommendedName>
            <fullName>Neurotrophic factor BDNF</fullName>
        </recommendedName>
    </component>
</protein>
<gene>
    <name type="primary">BDNF</name>
</gene>
<reference key="1">
    <citation type="journal article" date="2006" name="Mol. Phylogenet. Evol.">
        <title>Dispersal and vicariance: the complex evolutionary history of boid snakes.</title>
        <authorList>
            <person name="Noonan B.P."/>
            <person name="Chippindale P.T."/>
        </authorList>
    </citation>
    <scope>NUCLEOTIDE SEQUENCE [GENOMIC DNA]</scope>
</reference>